<dbReference type="EC" id="3.2.1.26"/>
<dbReference type="EMBL" id="U17695">
    <property type="protein sequence ID" value="AAA64487.1"/>
    <property type="molecule type" value="mRNA"/>
</dbReference>
<dbReference type="PIR" id="T02096">
    <property type="entry name" value="T02096"/>
</dbReference>
<dbReference type="RefSeq" id="NP_001105369.1">
    <property type="nucleotide sequence ID" value="NM_001111899.1"/>
</dbReference>
<dbReference type="SMR" id="P49174"/>
<dbReference type="FunCoup" id="P49174">
    <property type="interactions" value="203"/>
</dbReference>
<dbReference type="STRING" id="4577.P49174"/>
<dbReference type="CAZy" id="GH32">
    <property type="family name" value="Glycoside Hydrolase Family 32"/>
</dbReference>
<dbReference type="PaxDb" id="4577-GRMZM2G139300_P01"/>
<dbReference type="GeneID" id="542314"/>
<dbReference type="KEGG" id="zma:542314"/>
<dbReference type="MaizeGDB" id="113032"/>
<dbReference type="eggNOG" id="KOG0228">
    <property type="taxonomic scope" value="Eukaryota"/>
</dbReference>
<dbReference type="InParanoid" id="P49174"/>
<dbReference type="OrthoDB" id="202537at2759"/>
<dbReference type="Proteomes" id="UP000007305">
    <property type="component" value="Unplaced"/>
</dbReference>
<dbReference type="ExpressionAtlas" id="P49174">
    <property type="expression patterns" value="baseline and differential"/>
</dbReference>
<dbReference type="GO" id="GO:0005576">
    <property type="term" value="C:extracellular region"/>
    <property type="evidence" value="ECO:0007669"/>
    <property type="project" value="UniProtKB-KW"/>
</dbReference>
<dbReference type="GO" id="GO:0004564">
    <property type="term" value="F:beta-fructofuranosidase activity"/>
    <property type="evidence" value="ECO:0007669"/>
    <property type="project" value="UniProtKB-EC"/>
</dbReference>
<dbReference type="GO" id="GO:0005975">
    <property type="term" value="P:carbohydrate metabolic process"/>
    <property type="evidence" value="ECO:0007669"/>
    <property type="project" value="InterPro"/>
</dbReference>
<dbReference type="CDD" id="cd18624">
    <property type="entry name" value="GH32_Fruct1-like"/>
    <property type="match status" value="1"/>
</dbReference>
<dbReference type="FunFam" id="2.115.10.20:FF:000001">
    <property type="entry name" value="Beta-fructofuranosidase, insoluble isoenzyme CWINV1"/>
    <property type="match status" value="1"/>
</dbReference>
<dbReference type="FunFam" id="2.60.120.560:FF:000002">
    <property type="entry name" value="Beta-fructofuranosidase, insoluble isoenzyme CWINV1"/>
    <property type="match status" value="1"/>
</dbReference>
<dbReference type="Gene3D" id="2.60.120.560">
    <property type="entry name" value="Exo-inulinase, domain 1"/>
    <property type="match status" value="1"/>
</dbReference>
<dbReference type="Gene3D" id="2.115.10.20">
    <property type="entry name" value="Glycosyl hydrolase domain, family 43"/>
    <property type="match status" value="1"/>
</dbReference>
<dbReference type="InterPro" id="IPR013320">
    <property type="entry name" value="ConA-like_dom_sf"/>
</dbReference>
<dbReference type="InterPro" id="IPR050551">
    <property type="entry name" value="Fructan_Metab_Enzymes"/>
</dbReference>
<dbReference type="InterPro" id="IPR001362">
    <property type="entry name" value="Glyco_hydro_32"/>
</dbReference>
<dbReference type="InterPro" id="IPR018053">
    <property type="entry name" value="Glyco_hydro_32_AS"/>
</dbReference>
<dbReference type="InterPro" id="IPR013189">
    <property type="entry name" value="Glyco_hydro_32_C"/>
</dbReference>
<dbReference type="InterPro" id="IPR013148">
    <property type="entry name" value="Glyco_hydro_32_N"/>
</dbReference>
<dbReference type="InterPro" id="IPR023296">
    <property type="entry name" value="Glyco_hydro_beta-prop_sf"/>
</dbReference>
<dbReference type="PANTHER" id="PTHR31953">
    <property type="entry name" value="BETA-FRUCTOFURANOSIDASE, INSOLUBLE ISOENZYME CWINV1-RELATED"/>
    <property type="match status" value="1"/>
</dbReference>
<dbReference type="Pfam" id="PF08244">
    <property type="entry name" value="Glyco_hydro_32C"/>
    <property type="match status" value="1"/>
</dbReference>
<dbReference type="Pfam" id="PF00251">
    <property type="entry name" value="Glyco_hydro_32N"/>
    <property type="match status" value="1"/>
</dbReference>
<dbReference type="SMART" id="SM00640">
    <property type="entry name" value="Glyco_32"/>
    <property type="match status" value="1"/>
</dbReference>
<dbReference type="SUPFAM" id="SSF75005">
    <property type="entry name" value="Arabinanase/levansucrase/invertase"/>
    <property type="match status" value="1"/>
</dbReference>
<dbReference type="SUPFAM" id="SSF49899">
    <property type="entry name" value="Concanavalin A-like lectins/glucanases"/>
    <property type="match status" value="1"/>
</dbReference>
<dbReference type="PROSITE" id="PS00609">
    <property type="entry name" value="GLYCOSYL_HYDROL_F32"/>
    <property type="match status" value="1"/>
</dbReference>
<accession>P49174</accession>
<protein>
    <recommendedName>
        <fullName>Beta-fructofuranosidase, cell wall isozyme</fullName>
        <ecNumber>3.2.1.26</ecNumber>
    </recommendedName>
    <alternativeName>
        <fullName>Invertase</fullName>
    </alternativeName>
    <alternativeName>
        <fullName>Sucrose hydrolase</fullName>
    </alternativeName>
</protein>
<name>INVA_MAIZE</name>
<reference key="1">
    <citation type="submission" date="1994-11" db="EMBL/GenBank/DDBJ databases">
        <authorList>
            <person name="Shanker S."/>
        </authorList>
    </citation>
    <scope>NUCLEOTIDE SEQUENCE [MRNA]</scope>
    <source>
        <strain>cv. Black Mexican Sweet</strain>
    </source>
</reference>
<proteinExistence type="evidence at transcript level"/>
<comment type="catalytic activity">
    <reaction evidence="2">
        <text>Hydrolysis of terminal non-reducing beta-D-fructofuranoside residues in beta-D-fructofuranosides.</text>
        <dbReference type="EC" id="3.2.1.26"/>
    </reaction>
</comment>
<comment type="subcellular location">
    <subcellularLocation>
        <location>Secreted</location>
        <location>Cell wall</location>
    </subcellularLocation>
</comment>
<comment type="induction">
    <text>By wounding and bacterial infection.</text>
</comment>
<comment type="similarity">
    <text evidence="3">Belongs to the glycosyl hydrolase 32 family.</text>
</comment>
<organism>
    <name type="scientific">Zea mays</name>
    <name type="common">Maize</name>
    <dbReference type="NCBI Taxonomy" id="4577"/>
    <lineage>
        <taxon>Eukaryota</taxon>
        <taxon>Viridiplantae</taxon>
        <taxon>Streptophyta</taxon>
        <taxon>Embryophyta</taxon>
        <taxon>Tracheophyta</taxon>
        <taxon>Spermatophyta</taxon>
        <taxon>Magnoliopsida</taxon>
        <taxon>Liliopsida</taxon>
        <taxon>Poales</taxon>
        <taxon>Poaceae</taxon>
        <taxon>PACMAD clade</taxon>
        <taxon>Panicoideae</taxon>
        <taxon>Andropogonodae</taxon>
        <taxon>Andropogoneae</taxon>
        <taxon>Tripsacinae</taxon>
        <taxon>Zea</taxon>
    </lineage>
</organism>
<feature type="signal peptide" evidence="1">
    <location>
        <begin position="1"/>
        <end position="28"/>
    </location>
</feature>
<feature type="chain" id="PRO_0000033376" description="Beta-fructofuranosidase, cell wall isozyme">
    <location>
        <begin position="29"/>
        <end position="590"/>
    </location>
</feature>
<feature type="active site" evidence="2">
    <location>
        <position position="68"/>
    </location>
</feature>
<feature type="glycosylation site" description="N-linked (GlcNAc...) asparagine" evidence="1">
    <location>
        <position position="190"/>
    </location>
</feature>
<feature type="glycosylation site" description="N-linked (GlcNAc...) asparagine" evidence="1">
    <location>
        <position position="341"/>
    </location>
</feature>
<keyword id="KW-0134">Cell wall</keyword>
<keyword id="KW-0325">Glycoprotein</keyword>
<keyword id="KW-0326">Glycosidase</keyword>
<keyword id="KW-0378">Hydrolase</keyword>
<keyword id="KW-1185">Reference proteome</keyword>
<keyword id="KW-0964">Secreted</keyword>
<keyword id="KW-0732">Signal</keyword>
<evidence type="ECO:0000255" key="1"/>
<evidence type="ECO:0000255" key="2">
    <source>
        <dbReference type="PROSITE-ProRule" id="PRU10067"/>
    </source>
</evidence>
<evidence type="ECO:0000305" key="3"/>
<sequence length="590" mass="65198">MGTRPRGVVLAPWAVVLVLVLALRLAGASHVIHRSLEAEAAPSVPASIVSPLLRTGYHFQPPMNWINDPNAPLYYKGWYHLFYQYNPKGAVWGNIVWAHSVSRDLINWVALEPAIYPSIPSDKYGCWSGSATILEDGTPAILYTGIDRADINYQVQVLALPKDASDPLLREWEKPEEYNPVATPAAGGINATQFRDPTTAWRHAGHWRMLVGSVRGARGMALVYRSRDFRKWTKAKHPLHSAALTGMWECPDFFPVSGPGLQAGLDTSAPGTKYVLKSSLDLTRYDYYTIGSYDGGKDRYYPDDPAGDYHHRRRYDYGNYYASKTFYDPVERRRVLLGWANESDSVPDDKAKGWAGIHAIPRKIWLDPTGKQLLQWPIHEVEKLRGKAVSVDAKLVKPGDHFEVTGIATYQADVEVSFELELEAGTSLLEKAEAFDPAYDDDAQKLCGVKGADARGGVGPFGLWVLASADLQERTAVFFRVFRDGHGKPKVLMCTDPTKSSLSPDLYKPTFAGFVDADISSGKITLRSLIDRSVVESFGAGGKTCILSRVYPSIAVGKDAHLYVFNNGEVDVTVSGLTAWEMKKPLMNGA</sequence>